<comment type="function">
    <text evidence="1">Succinyl-CoA synthetase functions in the citric acid cycle (TCA), coupling the hydrolysis of succinyl-CoA to the synthesis of either ATP or GTP and thus represents the only step of substrate-level phosphorylation in the TCA. The beta subunit provides nucleotide specificity of the enzyme and binds the substrate succinate, while the binding sites for coenzyme A and phosphate are found in the alpha subunit.</text>
</comment>
<comment type="catalytic activity">
    <reaction evidence="1">
        <text>succinate + ATP + CoA = succinyl-CoA + ADP + phosphate</text>
        <dbReference type="Rhea" id="RHEA:17661"/>
        <dbReference type="ChEBI" id="CHEBI:30031"/>
        <dbReference type="ChEBI" id="CHEBI:30616"/>
        <dbReference type="ChEBI" id="CHEBI:43474"/>
        <dbReference type="ChEBI" id="CHEBI:57287"/>
        <dbReference type="ChEBI" id="CHEBI:57292"/>
        <dbReference type="ChEBI" id="CHEBI:456216"/>
        <dbReference type="EC" id="6.2.1.5"/>
    </reaction>
    <physiologicalReaction direction="right-to-left" evidence="1">
        <dbReference type="Rhea" id="RHEA:17663"/>
    </physiologicalReaction>
</comment>
<comment type="catalytic activity">
    <reaction evidence="1">
        <text>GTP + succinate + CoA = succinyl-CoA + GDP + phosphate</text>
        <dbReference type="Rhea" id="RHEA:22120"/>
        <dbReference type="ChEBI" id="CHEBI:30031"/>
        <dbReference type="ChEBI" id="CHEBI:37565"/>
        <dbReference type="ChEBI" id="CHEBI:43474"/>
        <dbReference type="ChEBI" id="CHEBI:57287"/>
        <dbReference type="ChEBI" id="CHEBI:57292"/>
        <dbReference type="ChEBI" id="CHEBI:58189"/>
    </reaction>
    <physiologicalReaction direction="right-to-left" evidence="1">
        <dbReference type="Rhea" id="RHEA:22122"/>
    </physiologicalReaction>
</comment>
<comment type="cofactor">
    <cofactor evidence="1">
        <name>Mg(2+)</name>
        <dbReference type="ChEBI" id="CHEBI:18420"/>
    </cofactor>
    <text evidence="1">Binds 1 Mg(2+) ion per subunit.</text>
</comment>
<comment type="pathway">
    <text evidence="1">Carbohydrate metabolism; tricarboxylic acid cycle; succinate from succinyl-CoA (ligase route): step 1/1.</text>
</comment>
<comment type="subunit">
    <text evidence="1">Heterotetramer of two alpha and two beta subunits.</text>
</comment>
<comment type="similarity">
    <text evidence="1">Belongs to the succinate/malate CoA ligase beta subunit family.</text>
</comment>
<evidence type="ECO:0000255" key="1">
    <source>
        <dbReference type="HAMAP-Rule" id="MF_00558"/>
    </source>
</evidence>
<dbReference type="EC" id="6.2.1.5" evidence="1"/>
<dbReference type="EMBL" id="AP008957">
    <property type="protein sequence ID" value="BAH35137.1"/>
    <property type="molecule type" value="Genomic_DNA"/>
</dbReference>
<dbReference type="RefSeq" id="WP_019744753.1">
    <property type="nucleotide sequence ID" value="NC_012490.1"/>
</dbReference>
<dbReference type="SMR" id="C1A3F2"/>
<dbReference type="GeneID" id="57485677"/>
<dbReference type="KEGG" id="rer:RER_44290"/>
<dbReference type="eggNOG" id="COG0045">
    <property type="taxonomic scope" value="Bacteria"/>
</dbReference>
<dbReference type="HOGENOM" id="CLU_037430_4_0_11"/>
<dbReference type="UniPathway" id="UPA00223">
    <property type="reaction ID" value="UER00999"/>
</dbReference>
<dbReference type="Proteomes" id="UP000002204">
    <property type="component" value="Chromosome"/>
</dbReference>
<dbReference type="GO" id="GO:0005829">
    <property type="term" value="C:cytosol"/>
    <property type="evidence" value="ECO:0007669"/>
    <property type="project" value="TreeGrafter"/>
</dbReference>
<dbReference type="GO" id="GO:0042709">
    <property type="term" value="C:succinate-CoA ligase complex"/>
    <property type="evidence" value="ECO:0007669"/>
    <property type="project" value="TreeGrafter"/>
</dbReference>
<dbReference type="GO" id="GO:0005524">
    <property type="term" value="F:ATP binding"/>
    <property type="evidence" value="ECO:0007669"/>
    <property type="project" value="UniProtKB-UniRule"/>
</dbReference>
<dbReference type="GO" id="GO:0000287">
    <property type="term" value="F:magnesium ion binding"/>
    <property type="evidence" value="ECO:0007669"/>
    <property type="project" value="UniProtKB-UniRule"/>
</dbReference>
<dbReference type="GO" id="GO:0004775">
    <property type="term" value="F:succinate-CoA ligase (ADP-forming) activity"/>
    <property type="evidence" value="ECO:0007669"/>
    <property type="project" value="UniProtKB-UniRule"/>
</dbReference>
<dbReference type="GO" id="GO:0004776">
    <property type="term" value="F:succinate-CoA ligase (GDP-forming) activity"/>
    <property type="evidence" value="ECO:0007669"/>
    <property type="project" value="RHEA"/>
</dbReference>
<dbReference type="GO" id="GO:0006104">
    <property type="term" value="P:succinyl-CoA metabolic process"/>
    <property type="evidence" value="ECO:0007669"/>
    <property type="project" value="TreeGrafter"/>
</dbReference>
<dbReference type="GO" id="GO:0006099">
    <property type="term" value="P:tricarboxylic acid cycle"/>
    <property type="evidence" value="ECO:0007669"/>
    <property type="project" value="UniProtKB-UniRule"/>
</dbReference>
<dbReference type="FunFam" id="3.30.1490.20:FF:000014">
    <property type="entry name" value="Succinate--CoA ligase [ADP-forming] subunit beta"/>
    <property type="match status" value="1"/>
</dbReference>
<dbReference type="FunFam" id="3.30.470.20:FF:000002">
    <property type="entry name" value="Succinate--CoA ligase [ADP-forming] subunit beta"/>
    <property type="match status" value="1"/>
</dbReference>
<dbReference type="FunFam" id="3.40.50.261:FF:000007">
    <property type="entry name" value="Succinate--CoA ligase [ADP-forming] subunit beta"/>
    <property type="match status" value="1"/>
</dbReference>
<dbReference type="Gene3D" id="3.30.1490.20">
    <property type="entry name" value="ATP-grasp fold, A domain"/>
    <property type="match status" value="1"/>
</dbReference>
<dbReference type="Gene3D" id="3.30.470.20">
    <property type="entry name" value="ATP-grasp fold, B domain"/>
    <property type="match status" value="1"/>
</dbReference>
<dbReference type="Gene3D" id="3.40.50.261">
    <property type="entry name" value="Succinyl-CoA synthetase domains"/>
    <property type="match status" value="1"/>
</dbReference>
<dbReference type="HAMAP" id="MF_00558">
    <property type="entry name" value="Succ_CoA_beta"/>
    <property type="match status" value="1"/>
</dbReference>
<dbReference type="InterPro" id="IPR011761">
    <property type="entry name" value="ATP-grasp"/>
</dbReference>
<dbReference type="InterPro" id="IPR013650">
    <property type="entry name" value="ATP-grasp_succ-CoA_synth-type"/>
</dbReference>
<dbReference type="InterPro" id="IPR013815">
    <property type="entry name" value="ATP_grasp_subdomain_1"/>
</dbReference>
<dbReference type="InterPro" id="IPR017866">
    <property type="entry name" value="Succ-CoA_synthase_bsu_CS"/>
</dbReference>
<dbReference type="InterPro" id="IPR005811">
    <property type="entry name" value="SUCC_ACL_C"/>
</dbReference>
<dbReference type="InterPro" id="IPR005809">
    <property type="entry name" value="Succ_CoA_ligase-like_bsu"/>
</dbReference>
<dbReference type="InterPro" id="IPR016102">
    <property type="entry name" value="Succinyl-CoA_synth-like"/>
</dbReference>
<dbReference type="NCBIfam" id="NF001913">
    <property type="entry name" value="PRK00696.1"/>
    <property type="match status" value="1"/>
</dbReference>
<dbReference type="NCBIfam" id="TIGR01016">
    <property type="entry name" value="sucCoAbeta"/>
    <property type="match status" value="1"/>
</dbReference>
<dbReference type="PANTHER" id="PTHR11815:SF10">
    <property type="entry name" value="SUCCINATE--COA LIGASE [GDP-FORMING] SUBUNIT BETA, MITOCHONDRIAL"/>
    <property type="match status" value="1"/>
</dbReference>
<dbReference type="PANTHER" id="PTHR11815">
    <property type="entry name" value="SUCCINYL-COA SYNTHETASE BETA CHAIN"/>
    <property type="match status" value="1"/>
</dbReference>
<dbReference type="Pfam" id="PF08442">
    <property type="entry name" value="ATP-grasp_2"/>
    <property type="match status" value="1"/>
</dbReference>
<dbReference type="Pfam" id="PF00549">
    <property type="entry name" value="Ligase_CoA"/>
    <property type="match status" value="1"/>
</dbReference>
<dbReference type="PIRSF" id="PIRSF001554">
    <property type="entry name" value="SucCS_beta"/>
    <property type="match status" value="1"/>
</dbReference>
<dbReference type="SUPFAM" id="SSF56059">
    <property type="entry name" value="Glutathione synthetase ATP-binding domain-like"/>
    <property type="match status" value="1"/>
</dbReference>
<dbReference type="SUPFAM" id="SSF52210">
    <property type="entry name" value="Succinyl-CoA synthetase domains"/>
    <property type="match status" value="1"/>
</dbReference>
<dbReference type="PROSITE" id="PS50975">
    <property type="entry name" value="ATP_GRASP"/>
    <property type="match status" value="1"/>
</dbReference>
<dbReference type="PROSITE" id="PS01217">
    <property type="entry name" value="SUCCINYL_COA_LIG_3"/>
    <property type="match status" value="1"/>
</dbReference>
<accession>C1A3F2</accession>
<name>SUCC_RHOE4</name>
<gene>
    <name evidence="1" type="primary">sucC</name>
    <name type="ordered locus">RER_44290</name>
</gene>
<feature type="chain" id="PRO_1000212030" description="Succinate--CoA ligase [ADP-forming] subunit beta">
    <location>
        <begin position="1"/>
        <end position="389"/>
    </location>
</feature>
<feature type="domain" description="ATP-grasp" evidence="1">
    <location>
        <begin position="9"/>
        <end position="236"/>
    </location>
</feature>
<feature type="binding site" evidence="1">
    <location>
        <position position="45"/>
    </location>
    <ligand>
        <name>ATP</name>
        <dbReference type="ChEBI" id="CHEBI:30616"/>
    </ligand>
</feature>
<feature type="binding site" evidence="1">
    <location>
        <begin position="52"/>
        <end position="54"/>
    </location>
    <ligand>
        <name>ATP</name>
        <dbReference type="ChEBI" id="CHEBI:30616"/>
    </ligand>
</feature>
<feature type="binding site" evidence="1">
    <location>
        <position position="94"/>
    </location>
    <ligand>
        <name>ATP</name>
        <dbReference type="ChEBI" id="CHEBI:30616"/>
    </ligand>
</feature>
<feature type="binding site" evidence="1">
    <location>
        <position position="99"/>
    </location>
    <ligand>
        <name>ATP</name>
        <dbReference type="ChEBI" id="CHEBI:30616"/>
    </ligand>
</feature>
<feature type="binding site" evidence="1">
    <location>
        <position position="191"/>
    </location>
    <ligand>
        <name>Mg(2+)</name>
        <dbReference type="ChEBI" id="CHEBI:18420"/>
    </ligand>
</feature>
<feature type="binding site" evidence="1">
    <location>
        <position position="205"/>
    </location>
    <ligand>
        <name>Mg(2+)</name>
        <dbReference type="ChEBI" id="CHEBI:18420"/>
    </ligand>
</feature>
<feature type="binding site" evidence="1">
    <location>
        <position position="256"/>
    </location>
    <ligand>
        <name>substrate</name>
        <note>ligand shared with subunit alpha</note>
    </ligand>
</feature>
<feature type="binding site" evidence="1">
    <location>
        <begin position="318"/>
        <end position="320"/>
    </location>
    <ligand>
        <name>substrate</name>
        <note>ligand shared with subunit alpha</note>
    </ligand>
</feature>
<reference key="1">
    <citation type="submission" date="2005-03" db="EMBL/GenBank/DDBJ databases">
        <title>Comparison of the complete genome sequences of Rhodococcus erythropolis PR4 and Rhodococcus opacus B4.</title>
        <authorList>
            <person name="Takarada H."/>
            <person name="Sekine M."/>
            <person name="Hosoyama A."/>
            <person name="Yamada R."/>
            <person name="Fujisawa T."/>
            <person name="Omata S."/>
            <person name="Shimizu A."/>
            <person name="Tsukatani N."/>
            <person name="Tanikawa S."/>
            <person name="Fujita N."/>
            <person name="Harayama S."/>
        </authorList>
    </citation>
    <scope>NUCLEOTIDE SEQUENCE [LARGE SCALE GENOMIC DNA]</scope>
    <source>
        <strain>PR4 / NBRC 100887</strain>
    </source>
</reference>
<keyword id="KW-0067">ATP-binding</keyword>
<keyword id="KW-0436">Ligase</keyword>
<keyword id="KW-0460">Magnesium</keyword>
<keyword id="KW-0479">Metal-binding</keyword>
<keyword id="KW-0547">Nucleotide-binding</keyword>
<keyword id="KW-0816">Tricarboxylic acid cycle</keyword>
<sequence length="389" mass="40728">MDLFEYQAKELFAKHGVPTSAGRVTDTVAGAREIAEEIGKPVMVKAQVKVGGRGKAGGVKYSPDVDAAVANAEAILGLDIKGHVVKKLLVAEASDIAEEYYISFLLDRTNRTYLAMCSVEGGVEIEVTAEENPDALAKIPVDAVKGVDLAFARSIAEAGKLPAEVLDAAAVTIQKLWEVFINEDALLVEVNPLVRTPDDQILALDGKVTLDENAAFRQPGHEAFEDRDATDPLELKAKENDLNYVKLDGEVGIIGNGAGLVMSTLDVVAYAGENHGGVKPANFLDIGGGASAAVMAAGLDVILNDAQVKSVFVNVFGGITACDAVANGIVGALKTLGDEANKPLVVRLDGNNVEEGRRILAEANHPLVTVVATMDEAADKAAELAHAAK</sequence>
<organism>
    <name type="scientific">Rhodococcus erythropolis (strain PR4 / NBRC 100887)</name>
    <dbReference type="NCBI Taxonomy" id="234621"/>
    <lineage>
        <taxon>Bacteria</taxon>
        <taxon>Bacillati</taxon>
        <taxon>Actinomycetota</taxon>
        <taxon>Actinomycetes</taxon>
        <taxon>Mycobacteriales</taxon>
        <taxon>Nocardiaceae</taxon>
        <taxon>Rhodococcus</taxon>
        <taxon>Rhodococcus erythropolis group</taxon>
    </lineage>
</organism>
<protein>
    <recommendedName>
        <fullName evidence="1">Succinate--CoA ligase [ADP-forming] subunit beta</fullName>
        <ecNumber evidence="1">6.2.1.5</ecNumber>
    </recommendedName>
    <alternativeName>
        <fullName evidence="1">Succinyl-CoA synthetase subunit beta</fullName>
        <shortName evidence="1">SCS-beta</shortName>
    </alternativeName>
</protein>
<proteinExistence type="inferred from homology"/>